<accession>Q5E3F1</accession>
<protein>
    <recommendedName>
        <fullName evidence="1">Acyl-[acyl-carrier-protein]--UDP-N-acetylglucosamine O-acyltransferase</fullName>
        <shortName evidence="1">UDP-N-acetylglucosamine acyltransferase</shortName>
        <ecNumber evidence="1">2.3.1.129</ecNumber>
    </recommendedName>
</protein>
<gene>
    <name evidence="1" type="primary">lpxA</name>
    <name type="ordered locus">VF_1950</name>
</gene>
<feature type="chain" id="PRO_0000302608" description="Acyl-[acyl-carrier-protein]--UDP-N-acetylglucosamine O-acyltransferase">
    <location>
        <begin position="1"/>
        <end position="262"/>
    </location>
</feature>
<organism>
    <name type="scientific">Aliivibrio fischeri (strain ATCC 700601 / ES114)</name>
    <name type="common">Vibrio fischeri</name>
    <dbReference type="NCBI Taxonomy" id="312309"/>
    <lineage>
        <taxon>Bacteria</taxon>
        <taxon>Pseudomonadati</taxon>
        <taxon>Pseudomonadota</taxon>
        <taxon>Gammaproteobacteria</taxon>
        <taxon>Vibrionales</taxon>
        <taxon>Vibrionaceae</taxon>
        <taxon>Aliivibrio</taxon>
    </lineage>
</organism>
<keyword id="KW-0012">Acyltransferase</keyword>
<keyword id="KW-0963">Cytoplasm</keyword>
<keyword id="KW-0441">Lipid A biosynthesis</keyword>
<keyword id="KW-0444">Lipid biosynthesis</keyword>
<keyword id="KW-0443">Lipid metabolism</keyword>
<keyword id="KW-1185">Reference proteome</keyword>
<keyword id="KW-0677">Repeat</keyword>
<keyword id="KW-0808">Transferase</keyword>
<comment type="function">
    <text evidence="1">Involved in the biosynthesis of lipid A, a phosphorylated glycolipid that anchors the lipopolysaccharide to the outer membrane of the cell.</text>
</comment>
<comment type="catalytic activity">
    <reaction evidence="1">
        <text>a (3R)-hydroxyacyl-[ACP] + UDP-N-acetyl-alpha-D-glucosamine = a UDP-3-O-[(3R)-3-hydroxyacyl]-N-acetyl-alpha-D-glucosamine + holo-[ACP]</text>
        <dbReference type="Rhea" id="RHEA:67812"/>
        <dbReference type="Rhea" id="RHEA-COMP:9685"/>
        <dbReference type="Rhea" id="RHEA-COMP:9945"/>
        <dbReference type="ChEBI" id="CHEBI:57705"/>
        <dbReference type="ChEBI" id="CHEBI:64479"/>
        <dbReference type="ChEBI" id="CHEBI:78827"/>
        <dbReference type="ChEBI" id="CHEBI:173225"/>
        <dbReference type="EC" id="2.3.1.129"/>
    </reaction>
</comment>
<comment type="pathway">
    <text evidence="1">Glycolipid biosynthesis; lipid IV(A) biosynthesis; lipid IV(A) from (3R)-3-hydroxytetradecanoyl-[acyl-carrier-protein] and UDP-N-acetyl-alpha-D-glucosamine: step 1/6.</text>
</comment>
<comment type="subunit">
    <text evidence="1">Homotrimer.</text>
</comment>
<comment type="subcellular location">
    <subcellularLocation>
        <location evidence="1">Cytoplasm</location>
    </subcellularLocation>
</comment>
<comment type="similarity">
    <text evidence="1">Belongs to the transferase hexapeptide repeat family. LpxA subfamily.</text>
</comment>
<name>LPXA_ALIF1</name>
<sequence>MIHETAKIHPSAVIEGNVTIEANVSVGPFTYISGNVTIGEGTEVMSHVVIKGDTTIGKDNRIFAFAIIGEESQDKKYGGEATTVVIGDRNVIRESVQIHRGTVQDRGVTTVGSDNLLCVNVHIAHDCVVGDNIIMGNNATLAGHVTVEDFAIVSALSPVHQFCTVGAHSFIGGASVVVQDVPPFVMAQGNHCKPFGINIEGLKRRGFEKAEIHAIRRAYKALYRNGNTLEEAKVEINKEIEAFPVLQGFLDLFEKSTRGIIR</sequence>
<reference key="1">
    <citation type="journal article" date="2005" name="Proc. Natl. Acad. Sci. U.S.A.">
        <title>Complete genome sequence of Vibrio fischeri: a symbiotic bacterium with pathogenic congeners.</title>
        <authorList>
            <person name="Ruby E.G."/>
            <person name="Urbanowski M."/>
            <person name="Campbell J."/>
            <person name="Dunn A."/>
            <person name="Faini M."/>
            <person name="Gunsalus R."/>
            <person name="Lostroh P."/>
            <person name="Lupp C."/>
            <person name="McCann J."/>
            <person name="Millikan D."/>
            <person name="Schaefer A."/>
            <person name="Stabb E."/>
            <person name="Stevens A."/>
            <person name="Visick K."/>
            <person name="Whistler C."/>
            <person name="Greenberg E.P."/>
        </authorList>
    </citation>
    <scope>NUCLEOTIDE SEQUENCE [LARGE SCALE GENOMIC DNA]</scope>
    <source>
        <strain>ATCC 700601 / ES114</strain>
    </source>
</reference>
<evidence type="ECO:0000255" key="1">
    <source>
        <dbReference type="HAMAP-Rule" id="MF_00387"/>
    </source>
</evidence>
<dbReference type="EC" id="2.3.1.129" evidence="1"/>
<dbReference type="EMBL" id="CP000020">
    <property type="protein sequence ID" value="AAW86445.1"/>
    <property type="molecule type" value="Genomic_DNA"/>
</dbReference>
<dbReference type="RefSeq" id="WP_005420540.1">
    <property type="nucleotide sequence ID" value="NZ_CAWLES010000001.1"/>
</dbReference>
<dbReference type="RefSeq" id="YP_205333.1">
    <property type="nucleotide sequence ID" value="NC_006840.2"/>
</dbReference>
<dbReference type="SMR" id="Q5E3F1"/>
<dbReference type="STRING" id="312309.VF_1950"/>
<dbReference type="EnsemblBacteria" id="AAW86445">
    <property type="protein sequence ID" value="AAW86445"/>
    <property type="gene ID" value="VF_1950"/>
</dbReference>
<dbReference type="GeneID" id="54164646"/>
<dbReference type="KEGG" id="vfi:VF_1950"/>
<dbReference type="PATRIC" id="fig|312309.11.peg.1977"/>
<dbReference type="eggNOG" id="COG1043">
    <property type="taxonomic scope" value="Bacteria"/>
</dbReference>
<dbReference type="HOGENOM" id="CLU_061249_0_0_6"/>
<dbReference type="OrthoDB" id="9807278at2"/>
<dbReference type="UniPathway" id="UPA00359">
    <property type="reaction ID" value="UER00477"/>
</dbReference>
<dbReference type="Proteomes" id="UP000000537">
    <property type="component" value="Chromosome I"/>
</dbReference>
<dbReference type="GO" id="GO:0005737">
    <property type="term" value="C:cytoplasm"/>
    <property type="evidence" value="ECO:0007669"/>
    <property type="project" value="UniProtKB-SubCell"/>
</dbReference>
<dbReference type="GO" id="GO:0016020">
    <property type="term" value="C:membrane"/>
    <property type="evidence" value="ECO:0007669"/>
    <property type="project" value="GOC"/>
</dbReference>
<dbReference type="GO" id="GO:0008780">
    <property type="term" value="F:acyl-[acyl-carrier-protein]-UDP-N-acetylglucosamine O-acyltransferase activity"/>
    <property type="evidence" value="ECO:0007669"/>
    <property type="project" value="UniProtKB-UniRule"/>
</dbReference>
<dbReference type="GO" id="GO:0009245">
    <property type="term" value="P:lipid A biosynthetic process"/>
    <property type="evidence" value="ECO:0007669"/>
    <property type="project" value="UniProtKB-UniRule"/>
</dbReference>
<dbReference type="CDD" id="cd03351">
    <property type="entry name" value="LbH_UDP-GlcNAc_AT"/>
    <property type="match status" value="1"/>
</dbReference>
<dbReference type="Gene3D" id="2.160.10.10">
    <property type="entry name" value="Hexapeptide repeat proteins"/>
    <property type="match status" value="1"/>
</dbReference>
<dbReference type="Gene3D" id="1.20.1180.10">
    <property type="entry name" value="Udp N-acetylglucosamine O-acyltransferase, C-terminal domain"/>
    <property type="match status" value="1"/>
</dbReference>
<dbReference type="HAMAP" id="MF_00387">
    <property type="entry name" value="LpxA"/>
    <property type="match status" value="1"/>
</dbReference>
<dbReference type="InterPro" id="IPR029098">
    <property type="entry name" value="Acetyltransf_C"/>
</dbReference>
<dbReference type="InterPro" id="IPR037157">
    <property type="entry name" value="Acetyltransf_C_sf"/>
</dbReference>
<dbReference type="InterPro" id="IPR001451">
    <property type="entry name" value="Hexapep"/>
</dbReference>
<dbReference type="InterPro" id="IPR010137">
    <property type="entry name" value="Lipid_A_LpxA"/>
</dbReference>
<dbReference type="InterPro" id="IPR011004">
    <property type="entry name" value="Trimer_LpxA-like_sf"/>
</dbReference>
<dbReference type="NCBIfam" id="TIGR01852">
    <property type="entry name" value="lipid_A_lpxA"/>
    <property type="match status" value="1"/>
</dbReference>
<dbReference type="NCBIfam" id="NF003657">
    <property type="entry name" value="PRK05289.1"/>
    <property type="match status" value="1"/>
</dbReference>
<dbReference type="PANTHER" id="PTHR43480">
    <property type="entry name" value="ACYL-[ACYL-CARRIER-PROTEIN]--UDP-N-ACETYLGLUCOSAMINE O-ACYLTRANSFERASE"/>
    <property type="match status" value="1"/>
</dbReference>
<dbReference type="PANTHER" id="PTHR43480:SF1">
    <property type="entry name" value="ACYL-[ACYL-CARRIER-PROTEIN]--UDP-N-ACETYLGLUCOSAMINE O-ACYLTRANSFERASE, MITOCHONDRIAL-RELATED"/>
    <property type="match status" value="1"/>
</dbReference>
<dbReference type="Pfam" id="PF13720">
    <property type="entry name" value="Acetyltransf_11"/>
    <property type="match status" value="1"/>
</dbReference>
<dbReference type="Pfam" id="PF00132">
    <property type="entry name" value="Hexapep"/>
    <property type="match status" value="1"/>
</dbReference>
<dbReference type="PIRSF" id="PIRSF000456">
    <property type="entry name" value="UDP-GlcNAc_acltr"/>
    <property type="match status" value="1"/>
</dbReference>
<dbReference type="SUPFAM" id="SSF51161">
    <property type="entry name" value="Trimeric LpxA-like enzymes"/>
    <property type="match status" value="1"/>
</dbReference>
<proteinExistence type="inferred from homology"/>